<dbReference type="EC" id="4.1.1.39" evidence="1"/>
<dbReference type="EMBL" id="L01947">
    <property type="protein sequence ID" value="AAA84564.2"/>
    <property type="molecule type" value="Genomic_DNA"/>
</dbReference>
<dbReference type="SMR" id="P28445"/>
<dbReference type="GO" id="GO:0009507">
    <property type="term" value="C:chloroplast"/>
    <property type="evidence" value="ECO:0007669"/>
    <property type="project" value="UniProtKB-SubCell"/>
</dbReference>
<dbReference type="GO" id="GO:0000287">
    <property type="term" value="F:magnesium ion binding"/>
    <property type="evidence" value="ECO:0007669"/>
    <property type="project" value="InterPro"/>
</dbReference>
<dbReference type="GO" id="GO:0004497">
    <property type="term" value="F:monooxygenase activity"/>
    <property type="evidence" value="ECO:0007669"/>
    <property type="project" value="UniProtKB-KW"/>
</dbReference>
<dbReference type="GO" id="GO:0016984">
    <property type="term" value="F:ribulose-bisphosphate carboxylase activity"/>
    <property type="evidence" value="ECO:0007669"/>
    <property type="project" value="UniProtKB-EC"/>
</dbReference>
<dbReference type="GO" id="GO:0009853">
    <property type="term" value="P:photorespiration"/>
    <property type="evidence" value="ECO:0007669"/>
    <property type="project" value="UniProtKB-KW"/>
</dbReference>
<dbReference type="GO" id="GO:0019253">
    <property type="term" value="P:reductive pentose-phosphate cycle"/>
    <property type="evidence" value="ECO:0007669"/>
    <property type="project" value="UniProtKB-KW"/>
</dbReference>
<dbReference type="CDD" id="cd08212">
    <property type="entry name" value="RuBisCO_large_I"/>
    <property type="match status" value="1"/>
</dbReference>
<dbReference type="FunFam" id="3.20.20.110:FF:000001">
    <property type="entry name" value="Ribulose bisphosphate carboxylase large chain"/>
    <property type="match status" value="1"/>
</dbReference>
<dbReference type="FunFam" id="3.30.70.150:FF:000001">
    <property type="entry name" value="Ribulose bisphosphate carboxylase large chain"/>
    <property type="match status" value="1"/>
</dbReference>
<dbReference type="Gene3D" id="3.20.20.110">
    <property type="entry name" value="Ribulose bisphosphate carboxylase, large subunit, C-terminal domain"/>
    <property type="match status" value="1"/>
</dbReference>
<dbReference type="Gene3D" id="3.30.70.150">
    <property type="entry name" value="RuBisCO large subunit, N-terminal domain"/>
    <property type="match status" value="1"/>
</dbReference>
<dbReference type="HAMAP" id="MF_01338">
    <property type="entry name" value="RuBisCO_L_type1"/>
    <property type="match status" value="1"/>
</dbReference>
<dbReference type="InterPro" id="IPR033966">
    <property type="entry name" value="RuBisCO"/>
</dbReference>
<dbReference type="InterPro" id="IPR020878">
    <property type="entry name" value="RuBisCo_large_chain_AS"/>
</dbReference>
<dbReference type="InterPro" id="IPR000685">
    <property type="entry name" value="RuBisCO_lsu_C"/>
</dbReference>
<dbReference type="InterPro" id="IPR036376">
    <property type="entry name" value="RuBisCO_lsu_C_sf"/>
</dbReference>
<dbReference type="InterPro" id="IPR017443">
    <property type="entry name" value="RuBisCO_lsu_fd_N"/>
</dbReference>
<dbReference type="InterPro" id="IPR036422">
    <property type="entry name" value="RuBisCO_lsu_N_sf"/>
</dbReference>
<dbReference type="InterPro" id="IPR020888">
    <property type="entry name" value="RuBisCO_lsuI"/>
</dbReference>
<dbReference type="NCBIfam" id="NF003252">
    <property type="entry name" value="PRK04208.1"/>
    <property type="match status" value="1"/>
</dbReference>
<dbReference type="PANTHER" id="PTHR42704">
    <property type="entry name" value="RIBULOSE BISPHOSPHATE CARBOXYLASE"/>
    <property type="match status" value="1"/>
</dbReference>
<dbReference type="PANTHER" id="PTHR42704:SF15">
    <property type="entry name" value="RIBULOSE BISPHOSPHATE CARBOXYLASE LARGE CHAIN"/>
    <property type="match status" value="1"/>
</dbReference>
<dbReference type="Pfam" id="PF00016">
    <property type="entry name" value="RuBisCO_large"/>
    <property type="match status" value="1"/>
</dbReference>
<dbReference type="Pfam" id="PF02788">
    <property type="entry name" value="RuBisCO_large_N"/>
    <property type="match status" value="1"/>
</dbReference>
<dbReference type="SFLD" id="SFLDG01052">
    <property type="entry name" value="RuBisCO"/>
    <property type="match status" value="1"/>
</dbReference>
<dbReference type="SFLD" id="SFLDS00014">
    <property type="entry name" value="RuBisCO"/>
    <property type="match status" value="1"/>
</dbReference>
<dbReference type="SFLD" id="SFLDG00301">
    <property type="entry name" value="RuBisCO-like_proteins"/>
    <property type="match status" value="1"/>
</dbReference>
<dbReference type="SUPFAM" id="SSF51649">
    <property type="entry name" value="RuBisCo, C-terminal domain"/>
    <property type="match status" value="1"/>
</dbReference>
<dbReference type="SUPFAM" id="SSF54966">
    <property type="entry name" value="RuBisCO, large subunit, small (N-terminal) domain"/>
    <property type="match status" value="1"/>
</dbReference>
<dbReference type="PROSITE" id="PS00157">
    <property type="entry name" value="RUBISCO_LARGE"/>
    <property type="match status" value="1"/>
</dbReference>
<feature type="chain" id="PRO_0000062576" description="Ribulose bisphosphate carboxylase large chain">
    <location>
        <begin position="1" status="less than"/>
        <end position="459" status="greater than"/>
    </location>
</feature>
<feature type="active site" description="Proton acceptor" evidence="1">
    <location>
        <position position="165"/>
    </location>
</feature>
<feature type="active site" description="Proton acceptor" evidence="1">
    <location>
        <position position="284"/>
    </location>
</feature>
<feature type="binding site" description="in homodimeric partner" evidence="1">
    <location>
        <position position="113"/>
    </location>
    <ligand>
        <name>substrate</name>
    </ligand>
</feature>
<feature type="binding site" evidence="1">
    <location>
        <position position="163"/>
    </location>
    <ligand>
        <name>substrate</name>
    </ligand>
</feature>
<feature type="binding site" evidence="1">
    <location>
        <position position="167"/>
    </location>
    <ligand>
        <name>substrate</name>
    </ligand>
</feature>
<feature type="binding site" description="via carbamate group" evidence="1">
    <location>
        <position position="191"/>
    </location>
    <ligand>
        <name>Mg(2+)</name>
        <dbReference type="ChEBI" id="CHEBI:18420"/>
    </ligand>
</feature>
<feature type="binding site" evidence="1">
    <location>
        <position position="193"/>
    </location>
    <ligand>
        <name>Mg(2+)</name>
        <dbReference type="ChEBI" id="CHEBI:18420"/>
    </ligand>
</feature>
<feature type="binding site" evidence="1">
    <location>
        <position position="194"/>
    </location>
    <ligand>
        <name>Mg(2+)</name>
        <dbReference type="ChEBI" id="CHEBI:18420"/>
    </ligand>
</feature>
<feature type="binding site" evidence="1">
    <location>
        <position position="285"/>
    </location>
    <ligand>
        <name>substrate</name>
    </ligand>
</feature>
<feature type="binding site" evidence="1">
    <location>
        <position position="317"/>
    </location>
    <ligand>
        <name>substrate</name>
    </ligand>
</feature>
<feature type="binding site" evidence="1">
    <location>
        <position position="369"/>
    </location>
    <ligand>
        <name>substrate</name>
    </ligand>
</feature>
<feature type="site" description="Transition state stabilizer" evidence="1">
    <location>
        <position position="324"/>
    </location>
</feature>
<feature type="modified residue" description="N6,N6,N6-trimethyllysine" evidence="1">
    <location>
        <position position="4"/>
    </location>
</feature>
<feature type="modified residue" description="N6-carboxylysine" evidence="1">
    <location>
        <position position="191"/>
    </location>
</feature>
<feature type="disulfide bond" description="Interchain; in linked form" evidence="1">
    <location>
        <position position="237"/>
    </location>
</feature>
<feature type="non-terminal residue">
    <location>
        <position position="1"/>
    </location>
</feature>
<feature type="non-terminal residue">
    <location>
        <position position="459"/>
    </location>
</feature>
<protein>
    <recommendedName>
        <fullName evidence="1">Ribulose bisphosphate carboxylase large chain</fullName>
        <shortName evidence="1">RuBisCO large subunit</shortName>
        <ecNumber evidence="1">4.1.1.39</ecNumber>
    </recommendedName>
</protein>
<gene>
    <name evidence="1" type="primary">rbcL</name>
</gene>
<comment type="function">
    <text evidence="1">RuBisCO catalyzes two reactions: the carboxylation of D-ribulose 1,5-bisphosphate, the primary event in carbon dioxide fixation, as well as the oxidative fragmentation of the pentose substrate in the photorespiration process. Both reactions occur simultaneously and in competition at the same active site.</text>
</comment>
<comment type="catalytic activity">
    <reaction evidence="1">
        <text>2 (2R)-3-phosphoglycerate + 2 H(+) = D-ribulose 1,5-bisphosphate + CO2 + H2O</text>
        <dbReference type="Rhea" id="RHEA:23124"/>
        <dbReference type="ChEBI" id="CHEBI:15377"/>
        <dbReference type="ChEBI" id="CHEBI:15378"/>
        <dbReference type="ChEBI" id="CHEBI:16526"/>
        <dbReference type="ChEBI" id="CHEBI:57870"/>
        <dbReference type="ChEBI" id="CHEBI:58272"/>
        <dbReference type="EC" id="4.1.1.39"/>
    </reaction>
</comment>
<comment type="catalytic activity">
    <reaction evidence="1">
        <text>D-ribulose 1,5-bisphosphate + O2 = 2-phosphoglycolate + (2R)-3-phosphoglycerate + 2 H(+)</text>
        <dbReference type="Rhea" id="RHEA:36631"/>
        <dbReference type="ChEBI" id="CHEBI:15378"/>
        <dbReference type="ChEBI" id="CHEBI:15379"/>
        <dbReference type="ChEBI" id="CHEBI:57870"/>
        <dbReference type="ChEBI" id="CHEBI:58033"/>
        <dbReference type="ChEBI" id="CHEBI:58272"/>
    </reaction>
</comment>
<comment type="cofactor">
    <cofactor evidence="1">
        <name>Mg(2+)</name>
        <dbReference type="ChEBI" id="CHEBI:18420"/>
    </cofactor>
    <text evidence="1">Binds 1 Mg(2+) ion per subunit.</text>
</comment>
<comment type="subunit">
    <text evidence="1">Heterohexadecamer of 8 large chains and 8 small chains; disulfide-linked. The disulfide link is formed within the large subunit homodimers.</text>
</comment>
<comment type="subcellular location">
    <subcellularLocation>
        <location>Plastid</location>
        <location>Chloroplast</location>
    </subcellularLocation>
</comment>
<comment type="PTM">
    <text evidence="1">The disulfide bond which can form in the large chain dimeric partners within the hexadecamer appears to be associated with oxidative stress and protein turnover.</text>
</comment>
<comment type="miscellaneous">
    <text evidence="1">The basic functional RuBisCO is composed of a large chain homodimer in a 'head-to-tail' conformation. In form I RuBisCO this homodimer is arranged in a barrel-like tetramer with the small subunits forming a tetrameric 'cap' on each end of the 'barrel'.</text>
</comment>
<comment type="similarity">
    <text evidence="1">Belongs to the RuBisCO large chain family. Type I subfamily.</text>
</comment>
<sequence length="459" mass="50947">VGFKAGVKDYKLTYYTPDYETKDTDILAAFRVTPQPGVPPEEAGAAVAAESSTGTWTTVWTDGLTSLDRYKGRCYHIEPVAGEESQFIAYVAYPLDLFEEGSVTNMFTSIVGNVFGFKALRALRLEDLRIPTAYVKTFQGPPHGIQVERDKLNKYGRPLLGCTIKPKLGLSAKNYGRAVYECLRGGLDFTKDDENVNSQPFMRWRDRFLFCAEAIYKAQAETGEIKGHYLNATAGTCEDMMKRAVFARELGVPIVMHDYLTGGFTANTSLAHYCRDNGLLLHIHRAMHAVIDRQKNHGMHFRVLAKALRMSGGDHIHAGTVVGKLEGEREITLGFVDLLRDDFVEKDRSRGIYFTQDWVSMPGVLPVASGGIHVWHMPALTEIFGDDSVLQFGGGTLGHPWGNAPGAVANRVALEACVQARNEGRDLAREGNEIIREASKWSPELAAACEVWKEIKFEF</sequence>
<name>RBL_PRUDO</name>
<organism>
    <name type="scientific">Prunus domestica</name>
    <name type="common">Garden plum</name>
    <dbReference type="NCBI Taxonomy" id="3758"/>
    <lineage>
        <taxon>Eukaryota</taxon>
        <taxon>Viridiplantae</taxon>
        <taxon>Streptophyta</taxon>
        <taxon>Embryophyta</taxon>
        <taxon>Tracheophyta</taxon>
        <taxon>Spermatophyta</taxon>
        <taxon>Magnoliopsida</taxon>
        <taxon>eudicotyledons</taxon>
        <taxon>Gunneridae</taxon>
        <taxon>Pentapetalae</taxon>
        <taxon>rosids</taxon>
        <taxon>fabids</taxon>
        <taxon>Rosales</taxon>
        <taxon>Rosaceae</taxon>
        <taxon>Amygdaloideae</taxon>
        <taxon>Amygdaleae</taxon>
        <taxon>Prunus</taxon>
    </lineage>
</organism>
<accession>P28445</accession>
<evidence type="ECO:0000255" key="1">
    <source>
        <dbReference type="HAMAP-Rule" id="MF_01338"/>
    </source>
</evidence>
<reference key="1">
    <citation type="journal article" date="1992" name="Science">
        <title>Carnivorous plants: phylogeny and structural evolution.</title>
        <authorList>
            <person name="Albert V.A."/>
            <person name="Williams S.E."/>
            <person name="Chase M.W."/>
        </authorList>
    </citation>
    <scope>NUCLEOTIDE SEQUENCE [GENOMIC DNA]</scope>
</reference>
<proteinExistence type="inferred from homology"/>
<geneLocation type="chloroplast"/>
<keyword id="KW-0113">Calvin cycle</keyword>
<keyword id="KW-0120">Carbon dioxide fixation</keyword>
<keyword id="KW-0150">Chloroplast</keyword>
<keyword id="KW-1015">Disulfide bond</keyword>
<keyword id="KW-0456">Lyase</keyword>
<keyword id="KW-0460">Magnesium</keyword>
<keyword id="KW-0479">Metal-binding</keyword>
<keyword id="KW-0488">Methylation</keyword>
<keyword id="KW-0503">Monooxygenase</keyword>
<keyword id="KW-0560">Oxidoreductase</keyword>
<keyword id="KW-0601">Photorespiration</keyword>
<keyword id="KW-0602">Photosynthesis</keyword>
<keyword id="KW-0934">Plastid</keyword>